<dbReference type="EMBL" id="AE000657">
    <property type="protein sequence ID" value="AAC06522.1"/>
    <property type="molecule type" value="Genomic_DNA"/>
</dbReference>
<dbReference type="PIR" id="B70318">
    <property type="entry name" value="B70318"/>
</dbReference>
<dbReference type="RefSeq" id="NP_213134.1">
    <property type="nucleotide sequence ID" value="NC_000918.1"/>
</dbReference>
<dbReference type="RefSeq" id="WP_010880072.1">
    <property type="nucleotide sequence ID" value="NC_000918.1"/>
</dbReference>
<dbReference type="SMR" id="O66574"/>
<dbReference type="FunCoup" id="O66574">
    <property type="interactions" value="228"/>
</dbReference>
<dbReference type="STRING" id="224324.aq_192"/>
<dbReference type="EnsemblBacteria" id="AAC06522">
    <property type="protein sequence ID" value="AAC06522"/>
    <property type="gene ID" value="aq_192"/>
</dbReference>
<dbReference type="KEGG" id="aae:aq_192"/>
<dbReference type="PATRIC" id="fig|224324.8.peg.165"/>
<dbReference type="eggNOG" id="COG1220">
    <property type="taxonomic scope" value="Bacteria"/>
</dbReference>
<dbReference type="HOGENOM" id="CLU_033123_0_0_0"/>
<dbReference type="InParanoid" id="O66574"/>
<dbReference type="OrthoDB" id="9804062at2"/>
<dbReference type="Proteomes" id="UP000000798">
    <property type="component" value="Chromosome"/>
</dbReference>
<dbReference type="GO" id="GO:0009376">
    <property type="term" value="C:HslUV protease complex"/>
    <property type="evidence" value="ECO:0000318"/>
    <property type="project" value="GO_Central"/>
</dbReference>
<dbReference type="GO" id="GO:0005524">
    <property type="term" value="F:ATP binding"/>
    <property type="evidence" value="ECO:0000318"/>
    <property type="project" value="GO_Central"/>
</dbReference>
<dbReference type="GO" id="GO:0016887">
    <property type="term" value="F:ATP hydrolysis activity"/>
    <property type="evidence" value="ECO:0000318"/>
    <property type="project" value="GO_Central"/>
</dbReference>
<dbReference type="GO" id="GO:0008233">
    <property type="term" value="F:peptidase activity"/>
    <property type="evidence" value="ECO:0007669"/>
    <property type="project" value="InterPro"/>
</dbReference>
<dbReference type="GO" id="GO:0036402">
    <property type="term" value="F:proteasome-activating activity"/>
    <property type="evidence" value="ECO:0007669"/>
    <property type="project" value="UniProtKB-UniRule"/>
</dbReference>
<dbReference type="GO" id="GO:0043335">
    <property type="term" value="P:protein unfolding"/>
    <property type="evidence" value="ECO:0007669"/>
    <property type="project" value="UniProtKB-UniRule"/>
</dbReference>
<dbReference type="GO" id="GO:0051603">
    <property type="term" value="P:proteolysis involved in protein catabolic process"/>
    <property type="evidence" value="ECO:0000318"/>
    <property type="project" value="GO_Central"/>
</dbReference>
<dbReference type="CDD" id="cd19498">
    <property type="entry name" value="RecA-like_HslU"/>
    <property type="match status" value="1"/>
</dbReference>
<dbReference type="FunFam" id="3.40.50.300:FF:000213">
    <property type="entry name" value="ATP-dependent protease ATPase subunit HslU"/>
    <property type="match status" value="1"/>
</dbReference>
<dbReference type="FunFam" id="3.40.50.300:FF:000220">
    <property type="entry name" value="ATP-dependent protease ATPase subunit HslU"/>
    <property type="match status" value="1"/>
</dbReference>
<dbReference type="Gene3D" id="1.10.8.60">
    <property type="match status" value="1"/>
</dbReference>
<dbReference type="Gene3D" id="1.10.8.10">
    <property type="entry name" value="DNA helicase RuvA subunit, C-terminal domain"/>
    <property type="match status" value="1"/>
</dbReference>
<dbReference type="Gene3D" id="3.40.50.300">
    <property type="entry name" value="P-loop containing nucleotide triphosphate hydrolases"/>
    <property type="match status" value="2"/>
</dbReference>
<dbReference type="HAMAP" id="MF_00249">
    <property type="entry name" value="HslU"/>
    <property type="match status" value="1"/>
</dbReference>
<dbReference type="InterPro" id="IPR003593">
    <property type="entry name" value="AAA+_ATPase"/>
</dbReference>
<dbReference type="InterPro" id="IPR050052">
    <property type="entry name" value="ATP-dep_Clp_protease_ClpX"/>
</dbReference>
<dbReference type="InterPro" id="IPR003959">
    <property type="entry name" value="ATPase_AAA_core"/>
</dbReference>
<dbReference type="InterPro" id="IPR019489">
    <property type="entry name" value="Clp_ATPase_C"/>
</dbReference>
<dbReference type="InterPro" id="IPR004491">
    <property type="entry name" value="HslU"/>
</dbReference>
<dbReference type="InterPro" id="IPR027417">
    <property type="entry name" value="P-loop_NTPase"/>
</dbReference>
<dbReference type="NCBIfam" id="TIGR00390">
    <property type="entry name" value="hslU"/>
    <property type="match status" value="1"/>
</dbReference>
<dbReference type="NCBIfam" id="NF003544">
    <property type="entry name" value="PRK05201.1"/>
    <property type="match status" value="1"/>
</dbReference>
<dbReference type="PANTHER" id="PTHR48102">
    <property type="entry name" value="ATP-DEPENDENT CLP PROTEASE ATP-BINDING SUBUNIT CLPX-LIKE, MITOCHONDRIAL-RELATED"/>
    <property type="match status" value="1"/>
</dbReference>
<dbReference type="PANTHER" id="PTHR48102:SF3">
    <property type="entry name" value="ATP-DEPENDENT PROTEASE ATPASE SUBUNIT HSLU"/>
    <property type="match status" value="1"/>
</dbReference>
<dbReference type="Pfam" id="PF00004">
    <property type="entry name" value="AAA"/>
    <property type="match status" value="1"/>
</dbReference>
<dbReference type="Pfam" id="PF07724">
    <property type="entry name" value="AAA_2"/>
    <property type="match status" value="1"/>
</dbReference>
<dbReference type="SMART" id="SM00382">
    <property type="entry name" value="AAA"/>
    <property type="match status" value="1"/>
</dbReference>
<dbReference type="SMART" id="SM01086">
    <property type="entry name" value="ClpB_D2-small"/>
    <property type="match status" value="1"/>
</dbReference>
<dbReference type="SUPFAM" id="SSF52540">
    <property type="entry name" value="P-loop containing nucleoside triphosphate hydrolases"/>
    <property type="match status" value="1"/>
</dbReference>
<sequence>MTTKSLSELLEELTPKRVVEELNKYVVGQEEAKKAVAIALRNRWRRQKLPENLRNEVIPKNILMIGPTGVGKTEIARRLANLIKAPFVKVEATKYTEIGYVGRDVESMVRELVEVSFQMVKQEKMKEVRERARRLAEERLLDYLVPHQFTSFGIRESRDAGKREELRQKLRKGELDDRIVEIEVKEKTVPMVGIAGPPGLEELENQIKEMLSGLIPSKRRRKVKVKEALQILEQEEAEKLIDMEEVAREAIYRAENFGIIFIDEIDKIAVKTPGAGPGVSREGVQRDLLPILEGTTVNTKYGPVKTDHILFIGAGAFHMAKPSDLIPELQGRFPIRVELKPLTKEDFKRILVEPENALTKQYIELLKTENVYLEFTDDAIEEIARIAEEINTKTENIGARRLHTVMEKLLEDISFNAPEMAGQTIIIDAKFVKAKLENLVKDEELSRYIL</sequence>
<organism>
    <name type="scientific">Aquifex aeolicus (strain VF5)</name>
    <dbReference type="NCBI Taxonomy" id="224324"/>
    <lineage>
        <taxon>Bacteria</taxon>
        <taxon>Pseudomonadati</taxon>
        <taxon>Aquificota</taxon>
        <taxon>Aquificia</taxon>
        <taxon>Aquificales</taxon>
        <taxon>Aquificaceae</taxon>
        <taxon>Aquifex</taxon>
    </lineage>
</organism>
<protein>
    <recommendedName>
        <fullName evidence="1">ATP-dependent protease ATPase subunit HslU</fullName>
    </recommendedName>
    <alternativeName>
        <fullName evidence="1">Unfoldase HslU</fullName>
    </alternativeName>
</protein>
<gene>
    <name evidence="1" type="primary">hslU</name>
    <name type="ordered locus">aq_192</name>
</gene>
<reference key="1">
    <citation type="journal article" date="1998" name="Nature">
        <title>The complete genome of the hyperthermophilic bacterium Aquifex aeolicus.</title>
        <authorList>
            <person name="Deckert G."/>
            <person name="Warren P.V."/>
            <person name="Gaasterland T."/>
            <person name="Young W.G."/>
            <person name="Lenox A.L."/>
            <person name="Graham D.E."/>
            <person name="Overbeek R."/>
            <person name="Snead M.A."/>
            <person name="Keller M."/>
            <person name="Aujay M."/>
            <person name="Huber R."/>
            <person name="Feldman R.A."/>
            <person name="Short J.M."/>
            <person name="Olsen G.J."/>
            <person name="Swanson R.V."/>
        </authorList>
    </citation>
    <scope>NUCLEOTIDE SEQUENCE [LARGE SCALE GENOMIC DNA]</scope>
    <source>
        <strain>VF5</strain>
    </source>
</reference>
<proteinExistence type="inferred from homology"/>
<keyword id="KW-0067">ATP-binding</keyword>
<keyword id="KW-0143">Chaperone</keyword>
<keyword id="KW-0963">Cytoplasm</keyword>
<keyword id="KW-0547">Nucleotide-binding</keyword>
<keyword id="KW-1185">Reference proteome</keyword>
<comment type="function">
    <text evidence="1">ATPase subunit of a proteasome-like degradation complex; this subunit has chaperone activity. The binding of ATP and its subsequent hydrolysis by HslU are essential for unfolding of protein substrates subsequently hydrolyzed by HslV. HslU recognizes the N-terminal part of its protein substrates and unfolds these before they are guided to HslV for hydrolysis.</text>
</comment>
<comment type="subunit">
    <text evidence="1">A double ring-shaped homohexamer of HslV is capped on each side by a ring-shaped HslU homohexamer. The assembly of the HslU/HslV complex is dependent on binding of ATP.</text>
</comment>
<comment type="subcellular location">
    <subcellularLocation>
        <location evidence="1">Cytoplasm</location>
    </subcellularLocation>
</comment>
<comment type="similarity">
    <text evidence="1">Belongs to the ClpX chaperone family. HslU subfamily.</text>
</comment>
<evidence type="ECO:0000255" key="1">
    <source>
        <dbReference type="HAMAP-Rule" id="MF_00249"/>
    </source>
</evidence>
<feature type="chain" id="PRO_0000160468" description="ATP-dependent protease ATPase subunit HslU">
    <location>
        <begin position="1"/>
        <end position="450"/>
    </location>
</feature>
<feature type="binding site" evidence="1">
    <location>
        <position position="27"/>
    </location>
    <ligand>
        <name>ATP</name>
        <dbReference type="ChEBI" id="CHEBI:30616"/>
    </ligand>
</feature>
<feature type="binding site" evidence="1">
    <location>
        <begin position="69"/>
        <end position="74"/>
    </location>
    <ligand>
        <name>ATP</name>
        <dbReference type="ChEBI" id="CHEBI:30616"/>
    </ligand>
</feature>
<feature type="binding site" evidence="1">
    <location>
        <position position="263"/>
    </location>
    <ligand>
        <name>ATP</name>
        <dbReference type="ChEBI" id="CHEBI:30616"/>
    </ligand>
</feature>
<feature type="binding site" evidence="1">
    <location>
        <position position="328"/>
    </location>
    <ligand>
        <name>ATP</name>
        <dbReference type="ChEBI" id="CHEBI:30616"/>
    </ligand>
</feature>
<feature type="binding site" evidence="1">
    <location>
        <position position="400"/>
    </location>
    <ligand>
        <name>ATP</name>
        <dbReference type="ChEBI" id="CHEBI:30616"/>
    </ligand>
</feature>
<name>HSLU_AQUAE</name>
<accession>O66574</accession>